<sequence>MSDDAMKLVVVGAAGRMGQALIRLIHATEGLTLHAAVARPGSAFIGKDAGEIAGLGQIGIPVTDDPLSAFLHADGVIDFTTPATSVTFADLAAQARIVHVIGTTGCSAEDETRFKAAARHARIVKSGNMGLGINLLSVLVEQAARALPPADWDIEVLEMHHKHKVDAPSGTALLLGEAAAKGRGIDLGDHSVRVRDGYTGPRPAGSIGFATLRGGAVIGDHSVIFAGEGERLTLSHSAGDRSLFARGALQAALWARDKKPGLYSMLDVLGLSTR</sequence>
<protein>
    <recommendedName>
        <fullName evidence="1">4-hydroxy-tetrahydrodipicolinate reductase</fullName>
        <shortName evidence="1">HTPA reductase</shortName>
        <ecNumber evidence="1">1.17.1.8</ecNumber>
    </recommendedName>
</protein>
<comment type="function">
    <text evidence="1">Catalyzes the conversion of 4-hydroxy-tetrahydrodipicolinate (HTPA) to tetrahydrodipicolinate.</text>
</comment>
<comment type="catalytic activity">
    <reaction evidence="1">
        <text>(S)-2,3,4,5-tetrahydrodipicolinate + NAD(+) + H2O = (2S,4S)-4-hydroxy-2,3,4,5-tetrahydrodipicolinate + NADH + H(+)</text>
        <dbReference type="Rhea" id="RHEA:35323"/>
        <dbReference type="ChEBI" id="CHEBI:15377"/>
        <dbReference type="ChEBI" id="CHEBI:15378"/>
        <dbReference type="ChEBI" id="CHEBI:16845"/>
        <dbReference type="ChEBI" id="CHEBI:57540"/>
        <dbReference type="ChEBI" id="CHEBI:57945"/>
        <dbReference type="ChEBI" id="CHEBI:67139"/>
        <dbReference type="EC" id="1.17.1.8"/>
    </reaction>
</comment>
<comment type="catalytic activity">
    <reaction evidence="1">
        <text>(S)-2,3,4,5-tetrahydrodipicolinate + NADP(+) + H2O = (2S,4S)-4-hydroxy-2,3,4,5-tetrahydrodipicolinate + NADPH + H(+)</text>
        <dbReference type="Rhea" id="RHEA:35331"/>
        <dbReference type="ChEBI" id="CHEBI:15377"/>
        <dbReference type="ChEBI" id="CHEBI:15378"/>
        <dbReference type="ChEBI" id="CHEBI:16845"/>
        <dbReference type="ChEBI" id="CHEBI:57783"/>
        <dbReference type="ChEBI" id="CHEBI:58349"/>
        <dbReference type="ChEBI" id="CHEBI:67139"/>
        <dbReference type="EC" id="1.17.1.8"/>
    </reaction>
</comment>
<comment type="pathway">
    <text evidence="1">Amino-acid biosynthesis; L-lysine biosynthesis via DAP pathway; (S)-tetrahydrodipicolinate from L-aspartate: step 4/4.</text>
</comment>
<comment type="subcellular location">
    <subcellularLocation>
        <location evidence="1">Cytoplasm</location>
    </subcellularLocation>
</comment>
<comment type="similarity">
    <text evidence="1">Belongs to the DapB family.</text>
</comment>
<comment type="caution">
    <text evidence="2">Was originally thought to be a dihydrodipicolinate reductase (DHDPR), catalyzing the conversion of dihydrodipicolinate to tetrahydrodipicolinate. However, it was shown in E.coli that the substrate of the enzymatic reaction is not dihydrodipicolinate (DHDP) but in fact (2S,4S)-4-hydroxy-2,3,4,5-tetrahydrodipicolinic acid (HTPA), the product released by the DapA-catalyzed reaction.</text>
</comment>
<gene>
    <name evidence="1" type="primary">dapB</name>
    <name type="ordered locus">Arad_0295</name>
</gene>
<evidence type="ECO:0000255" key="1">
    <source>
        <dbReference type="HAMAP-Rule" id="MF_00102"/>
    </source>
</evidence>
<evidence type="ECO:0000305" key="2"/>
<accession>B9J6R4</accession>
<organism>
    <name type="scientific">Rhizobium rhizogenes (strain K84 / ATCC BAA-868)</name>
    <name type="common">Agrobacterium radiobacter</name>
    <dbReference type="NCBI Taxonomy" id="311403"/>
    <lineage>
        <taxon>Bacteria</taxon>
        <taxon>Pseudomonadati</taxon>
        <taxon>Pseudomonadota</taxon>
        <taxon>Alphaproteobacteria</taxon>
        <taxon>Hyphomicrobiales</taxon>
        <taxon>Rhizobiaceae</taxon>
        <taxon>Rhizobium/Agrobacterium group</taxon>
        <taxon>Rhizobium</taxon>
    </lineage>
</organism>
<dbReference type="EC" id="1.17.1.8" evidence="1"/>
<dbReference type="EMBL" id="CP000628">
    <property type="protein sequence ID" value="ACM25020.1"/>
    <property type="molecule type" value="Genomic_DNA"/>
</dbReference>
<dbReference type="RefSeq" id="WP_007702985.1">
    <property type="nucleotide sequence ID" value="NC_011985.1"/>
</dbReference>
<dbReference type="SMR" id="B9J6R4"/>
<dbReference type="STRING" id="311403.Arad_0295"/>
<dbReference type="GeneID" id="86850662"/>
<dbReference type="KEGG" id="ara:Arad_0295"/>
<dbReference type="eggNOG" id="COG0289">
    <property type="taxonomic scope" value="Bacteria"/>
</dbReference>
<dbReference type="HOGENOM" id="CLU_047479_2_1_5"/>
<dbReference type="UniPathway" id="UPA00034">
    <property type="reaction ID" value="UER00018"/>
</dbReference>
<dbReference type="Proteomes" id="UP000001600">
    <property type="component" value="Chromosome 1"/>
</dbReference>
<dbReference type="GO" id="GO:0005829">
    <property type="term" value="C:cytosol"/>
    <property type="evidence" value="ECO:0007669"/>
    <property type="project" value="TreeGrafter"/>
</dbReference>
<dbReference type="GO" id="GO:0008839">
    <property type="term" value="F:4-hydroxy-tetrahydrodipicolinate reductase"/>
    <property type="evidence" value="ECO:0007669"/>
    <property type="project" value="UniProtKB-EC"/>
</dbReference>
<dbReference type="GO" id="GO:0051287">
    <property type="term" value="F:NAD binding"/>
    <property type="evidence" value="ECO:0007669"/>
    <property type="project" value="UniProtKB-UniRule"/>
</dbReference>
<dbReference type="GO" id="GO:0050661">
    <property type="term" value="F:NADP binding"/>
    <property type="evidence" value="ECO:0007669"/>
    <property type="project" value="UniProtKB-UniRule"/>
</dbReference>
<dbReference type="GO" id="GO:0016726">
    <property type="term" value="F:oxidoreductase activity, acting on CH or CH2 groups, NAD or NADP as acceptor"/>
    <property type="evidence" value="ECO:0007669"/>
    <property type="project" value="UniProtKB-UniRule"/>
</dbReference>
<dbReference type="GO" id="GO:0019877">
    <property type="term" value="P:diaminopimelate biosynthetic process"/>
    <property type="evidence" value="ECO:0007669"/>
    <property type="project" value="UniProtKB-UniRule"/>
</dbReference>
<dbReference type="GO" id="GO:0009089">
    <property type="term" value="P:lysine biosynthetic process via diaminopimelate"/>
    <property type="evidence" value="ECO:0007669"/>
    <property type="project" value="UniProtKB-UniRule"/>
</dbReference>
<dbReference type="CDD" id="cd02274">
    <property type="entry name" value="DHDPR_N"/>
    <property type="match status" value="1"/>
</dbReference>
<dbReference type="FunFam" id="3.30.360.10:FF:000004">
    <property type="entry name" value="4-hydroxy-tetrahydrodipicolinate reductase"/>
    <property type="match status" value="1"/>
</dbReference>
<dbReference type="Gene3D" id="3.30.360.10">
    <property type="entry name" value="Dihydrodipicolinate Reductase, domain 2"/>
    <property type="match status" value="1"/>
</dbReference>
<dbReference type="Gene3D" id="3.40.50.720">
    <property type="entry name" value="NAD(P)-binding Rossmann-like Domain"/>
    <property type="match status" value="1"/>
</dbReference>
<dbReference type="HAMAP" id="MF_00102">
    <property type="entry name" value="DapB"/>
    <property type="match status" value="1"/>
</dbReference>
<dbReference type="InterPro" id="IPR022663">
    <property type="entry name" value="DapB_C"/>
</dbReference>
<dbReference type="InterPro" id="IPR000846">
    <property type="entry name" value="DapB_N"/>
</dbReference>
<dbReference type="InterPro" id="IPR022664">
    <property type="entry name" value="DapB_N_CS"/>
</dbReference>
<dbReference type="InterPro" id="IPR023940">
    <property type="entry name" value="DHDPR_bac"/>
</dbReference>
<dbReference type="InterPro" id="IPR036291">
    <property type="entry name" value="NAD(P)-bd_dom_sf"/>
</dbReference>
<dbReference type="NCBIfam" id="TIGR00036">
    <property type="entry name" value="dapB"/>
    <property type="match status" value="1"/>
</dbReference>
<dbReference type="PANTHER" id="PTHR20836:SF0">
    <property type="entry name" value="4-HYDROXY-TETRAHYDRODIPICOLINATE REDUCTASE 1, CHLOROPLASTIC-RELATED"/>
    <property type="match status" value="1"/>
</dbReference>
<dbReference type="PANTHER" id="PTHR20836">
    <property type="entry name" value="DIHYDRODIPICOLINATE REDUCTASE"/>
    <property type="match status" value="1"/>
</dbReference>
<dbReference type="Pfam" id="PF05173">
    <property type="entry name" value="DapB_C"/>
    <property type="match status" value="1"/>
</dbReference>
<dbReference type="Pfam" id="PF01113">
    <property type="entry name" value="DapB_N"/>
    <property type="match status" value="1"/>
</dbReference>
<dbReference type="PIRSF" id="PIRSF000161">
    <property type="entry name" value="DHPR"/>
    <property type="match status" value="1"/>
</dbReference>
<dbReference type="SUPFAM" id="SSF55347">
    <property type="entry name" value="Glyceraldehyde-3-phosphate dehydrogenase-like, C-terminal domain"/>
    <property type="match status" value="1"/>
</dbReference>
<dbReference type="SUPFAM" id="SSF51735">
    <property type="entry name" value="NAD(P)-binding Rossmann-fold domains"/>
    <property type="match status" value="1"/>
</dbReference>
<dbReference type="PROSITE" id="PS01298">
    <property type="entry name" value="DAPB"/>
    <property type="match status" value="1"/>
</dbReference>
<keyword id="KW-0028">Amino-acid biosynthesis</keyword>
<keyword id="KW-0963">Cytoplasm</keyword>
<keyword id="KW-0220">Diaminopimelate biosynthesis</keyword>
<keyword id="KW-0457">Lysine biosynthesis</keyword>
<keyword id="KW-0520">NAD</keyword>
<keyword id="KW-0521">NADP</keyword>
<keyword id="KW-0560">Oxidoreductase</keyword>
<feature type="chain" id="PRO_1000118836" description="4-hydroxy-tetrahydrodipicolinate reductase">
    <location>
        <begin position="1"/>
        <end position="274"/>
    </location>
</feature>
<feature type="active site" description="Proton donor/acceptor" evidence="1">
    <location>
        <position position="160"/>
    </location>
</feature>
<feature type="active site" description="Proton donor" evidence="1">
    <location>
        <position position="164"/>
    </location>
</feature>
<feature type="binding site" evidence="1">
    <location>
        <begin position="12"/>
        <end position="17"/>
    </location>
    <ligand>
        <name>NAD(+)</name>
        <dbReference type="ChEBI" id="CHEBI:57540"/>
    </ligand>
</feature>
<feature type="binding site" evidence="1">
    <location>
        <position position="39"/>
    </location>
    <ligand>
        <name>NADP(+)</name>
        <dbReference type="ChEBI" id="CHEBI:58349"/>
    </ligand>
</feature>
<feature type="binding site" evidence="1">
    <location>
        <begin position="102"/>
        <end position="104"/>
    </location>
    <ligand>
        <name>NAD(+)</name>
        <dbReference type="ChEBI" id="CHEBI:57540"/>
    </ligand>
</feature>
<feature type="binding site" evidence="1">
    <location>
        <begin position="126"/>
        <end position="129"/>
    </location>
    <ligand>
        <name>NAD(+)</name>
        <dbReference type="ChEBI" id="CHEBI:57540"/>
    </ligand>
</feature>
<feature type="binding site" evidence="1">
    <location>
        <position position="161"/>
    </location>
    <ligand>
        <name>(S)-2,3,4,5-tetrahydrodipicolinate</name>
        <dbReference type="ChEBI" id="CHEBI:16845"/>
    </ligand>
</feature>
<feature type="binding site" evidence="1">
    <location>
        <begin position="170"/>
        <end position="171"/>
    </location>
    <ligand>
        <name>(S)-2,3,4,5-tetrahydrodipicolinate</name>
        <dbReference type="ChEBI" id="CHEBI:16845"/>
    </ligand>
</feature>
<name>DAPB_RHIR8</name>
<proteinExistence type="inferred from homology"/>
<reference key="1">
    <citation type="journal article" date="2009" name="J. Bacteriol.">
        <title>Genome sequences of three Agrobacterium biovars help elucidate the evolution of multichromosome genomes in bacteria.</title>
        <authorList>
            <person name="Slater S.C."/>
            <person name="Goldman B.S."/>
            <person name="Goodner B."/>
            <person name="Setubal J.C."/>
            <person name="Farrand S.K."/>
            <person name="Nester E.W."/>
            <person name="Burr T.J."/>
            <person name="Banta L."/>
            <person name="Dickerman A.W."/>
            <person name="Paulsen I."/>
            <person name="Otten L."/>
            <person name="Suen G."/>
            <person name="Welch R."/>
            <person name="Almeida N.F."/>
            <person name="Arnold F."/>
            <person name="Burton O.T."/>
            <person name="Du Z."/>
            <person name="Ewing A."/>
            <person name="Godsy E."/>
            <person name="Heisel S."/>
            <person name="Houmiel K.L."/>
            <person name="Jhaveri J."/>
            <person name="Lu J."/>
            <person name="Miller N.M."/>
            <person name="Norton S."/>
            <person name="Chen Q."/>
            <person name="Phoolcharoen W."/>
            <person name="Ohlin V."/>
            <person name="Ondrusek D."/>
            <person name="Pride N."/>
            <person name="Stricklin S.L."/>
            <person name="Sun J."/>
            <person name="Wheeler C."/>
            <person name="Wilson L."/>
            <person name="Zhu H."/>
            <person name="Wood D.W."/>
        </authorList>
    </citation>
    <scope>NUCLEOTIDE SEQUENCE [LARGE SCALE GENOMIC DNA]</scope>
    <source>
        <strain>K84 / ATCC BAA-868</strain>
    </source>
</reference>